<evidence type="ECO:0000250" key="1">
    <source>
        <dbReference type="UniProtKB" id="Q2FXT0"/>
    </source>
</evidence>
<evidence type="ECO:0000255" key="2">
    <source>
        <dbReference type="HAMAP-Rule" id="MF_00539"/>
    </source>
</evidence>
<evidence type="ECO:0000256" key="3">
    <source>
        <dbReference type="SAM" id="MobiDB-lite"/>
    </source>
</evidence>
<evidence type="ECO:0000305" key="4"/>
<accession>C1CRK7</accession>
<organism>
    <name type="scientific">Streptococcus pneumoniae (strain Taiwan19F-14)</name>
    <dbReference type="NCBI Taxonomy" id="487213"/>
    <lineage>
        <taxon>Bacteria</taxon>
        <taxon>Bacillati</taxon>
        <taxon>Bacillota</taxon>
        <taxon>Bacilli</taxon>
        <taxon>Lactobacillales</taxon>
        <taxon>Streptococcaceae</taxon>
        <taxon>Streptococcus</taxon>
    </lineage>
</organism>
<feature type="propeptide" id="PRO_0000459959" evidence="1">
    <location>
        <begin position="1"/>
        <end position="12"/>
    </location>
</feature>
<feature type="chain" id="PRO_1000195892" description="Large ribosomal subunit protein bL27">
    <location>
        <begin position="13"/>
        <end position="97"/>
    </location>
</feature>
<feature type="region of interest" description="Disordered" evidence="3">
    <location>
        <begin position="13"/>
        <end position="37"/>
    </location>
</feature>
<protein>
    <recommendedName>
        <fullName evidence="2">Large ribosomal subunit protein bL27</fullName>
    </recommendedName>
    <alternativeName>
        <fullName evidence="4">50S ribosomal protein L27</fullName>
    </alternativeName>
</protein>
<comment type="PTM">
    <text evidence="1">The N-terminus is cleaved by ribosomal processing cysteine protease Prp.</text>
</comment>
<comment type="similarity">
    <text evidence="2">Belongs to the bacterial ribosomal protein bL27 family.</text>
</comment>
<dbReference type="EMBL" id="CP000921">
    <property type="protein sequence ID" value="ACO24082.1"/>
    <property type="molecule type" value="Genomic_DNA"/>
</dbReference>
<dbReference type="RefSeq" id="WP_000916509.1">
    <property type="nucleotide sequence ID" value="NC_012469.1"/>
</dbReference>
<dbReference type="SMR" id="C1CRK7"/>
<dbReference type="GeneID" id="93739803"/>
<dbReference type="KEGG" id="snt:SPT_1153"/>
<dbReference type="HOGENOM" id="CLU_095424_4_0_9"/>
<dbReference type="GO" id="GO:0022625">
    <property type="term" value="C:cytosolic large ribosomal subunit"/>
    <property type="evidence" value="ECO:0007669"/>
    <property type="project" value="TreeGrafter"/>
</dbReference>
<dbReference type="GO" id="GO:0003735">
    <property type="term" value="F:structural constituent of ribosome"/>
    <property type="evidence" value="ECO:0007669"/>
    <property type="project" value="InterPro"/>
</dbReference>
<dbReference type="GO" id="GO:0006412">
    <property type="term" value="P:translation"/>
    <property type="evidence" value="ECO:0007669"/>
    <property type="project" value="UniProtKB-UniRule"/>
</dbReference>
<dbReference type="FunFam" id="2.40.50.100:FF:000004">
    <property type="entry name" value="50S ribosomal protein L27"/>
    <property type="match status" value="1"/>
</dbReference>
<dbReference type="Gene3D" id="2.40.50.100">
    <property type="match status" value="1"/>
</dbReference>
<dbReference type="HAMAP" id="MF_00539">
    <property type="entry name" value="Ribosomal_bL27"/>
    <property type="match status" value="1"/>
</dbReference>
<dbReference type="InterPro" id="IPR001684">
    <property type="entry name" value="Ribosomal_bL27"/>
</dbReference>
<dbReference type="InterPro" id="IPR018261">
    <property type="entry name" value="Ribosomal_bL27_CS"/>
</dbReference>
<dbReference type="NCBIfam" id="TIGR00062">
    <property type="entry name" value="L27"/>
    <property type="match status" value="1"/>
</dbReference>
<dbReference type="PANTHER" id="PTHR15893:SF0">
    <property type="entry name" value="LARGE RIBOSOMAL SUBUNIT PROTEIN BL27M"/>
    <property type="match status" value="1"/>
</dbReference>
<dbReference type="PANTHER" id="PTHR15893">
    <property type="entry name" value="RIBOSOMAL PROTEIN L27"/>
    <property type="match status" value="1"/>
</dbReference>
<dbReference type="Pfam" id="PF01016">
    <property type="entry name" value="Ribosomal_L27"/>
    <property type="match status" value="1"/>
</dbReference>
<dbReference type="PRINTS" id="PR00063">
    <property type="entry name" value="RIBOSOMALL27"/>
</dbReference>
<dbReference type="SUPFAM" id="SSF110324">
    <property type="entry name" value="Ribosomal L27 protein-like"/>
    <property type="match status" value="1"/>
</dbReference>
<dbReference type="PROSITE" id="PS00831">
    <property type="entry name" value="RIBOSOMAL_L27"/>
    <property type="match status" value="1"/>
</dbReference>
<sequence length="97" mass="10462">MLKMTLNNLQLFAHKKGGGSTSNGRDSQAKRLGAKAADGQTVTGGSILYRQRGTHIYPGVNVGRGGDDTLFAKVEGVVRFERKGRDKKQVSVYPIAK</sequence>
<proteinExistence type="inferred from homology"/>
<keyword id="KW-0687">Ribonucleoprotein</keyword>
<keyword id="KW-0689">Ribosomal protein</keyword>
<gene>
    <name evidence="2" type="primary">rpmA</name>
    <name type="ordered locus">SPT_1153</name>
</gene>
<name>RL27_STRZT</name>
<reference key="1">
    <citation type="journal article" date="2010" name="Genome Biol.">
        <title>Structure and dynamics of the pan-genome of Streptococcus pneumoniae and closely related species.</title>
        <authorList>
            <person name="Donati C."/>
            <person name="Hiller N.L."/>
            <person name="Tettelin H."/>
            <person name="Muzzi A."/>
            <person name="Croucher N.J."/>
            <person name="Angiuoli S.V."/>
            <person name="Oggioni M."/>
            <person name="Dunning Hotopp J.C."/>
            <person name="Hu F.Z."/>
            <person name="Riley D.R."/>
            <person name="Covacci A."/>
            <person name="Mitchell T.J."/>
            <person name="Bentley S.D."/>
            <person name="Kilian M."/>
            <person name="Ehrlich G.D."/>
            <person name="Rappuoli R."/>
            <person name="Moxon E.R."/>
            <person name="Masignani V."/>
        </authorList>
    </citation>
    <scope>NUCLEOTIDE SEQUENCE [LARGE SCALE GENOMIC DNA]</scope>
    <source>
        <strain>Taiwan19F-14</strain>
    </source>
</reference>